<comment type="function">
    <text evidence="1">Transaldolase is important for the balance of metabolites in the pentose-phosphate pathway.</text>
</comment>
<comment type="catalytic activity">
    <reaction evidence="1">
        <text>D-sedoheptulose 7-phosphate + D-glyceraldehyde 3-phosphate = D-erythrose 4-phosphate + beta-D-fructose 6-phosphate</text>
        <dbReference type="Rhea" id="RHEA:17053"/>
        <dbReference type="ChEBI" id="CHEBI:16897"/>
        <dbReference type="ChEBI" id="CHEBI:57483"/>
        <dbReference type="ChEBI" id="CHEBI:57634"/>
        <dbReference type="ChEBI" id="CHEBI:59776"/>
        <dbReference type="EC" id="2.2.1.2"/>
    </reaction>
</comment>
<comment type="pathway">
    <text evidence="1">Carbohydrate degradation; pentose phosphate pathway; D-glyceraldehyde 3-phosphate and beta-D-fructose 6-phosphate from D-ribose 5-phosphate and D-xylulose 5-phosphate (non-oxidative stage): step 2/3.</text>
</comment>
<comment type="subcellular location">
    <subcellularLocation>
        <location evidence="1">Cytoplasm</location>
    </subcellularLocation>
</comment>
<comment type="similarity">
    <text evidence="1">Belongs to the transaldolase family. Type 3B subfamily.</text>
</comment>
<reference key="1">
    <citation type="submission" date="2009-06" db="EMBL/GenBank/DDBJ databases">
        <title>Complete sequence of chromosome of Geopacillus sp. WCH70.</title>
        <authorList>
            <consortium name="US DOE Joint Genome Institute"/>
            <person name="Lucas S."/>
            <person name="Copeland A."/>
            <person name="Lapidus A."/>
            <person name="Glavina del Rio T."/>
            <person name="Dalin E."/>
            <person name="Tice H."/>
            <person name="Bruce D."/>
            <person name="Goodwin L."/>
            <person name="Pitluck S."/>
            <person name="Chertkov O."/>
            <person name="Brettin T."/>
            <person name="Detter J.C."/>
            <person name="Han C."/>
            <person name="Larimer F."/>
            <person name="Land M."/>
            <person name="Hauser L."/>
            <person name="Kyrpides N."/>
            <person name="Mikhailova N."/>
            <person name="Brumm P."/>
            <person name="Mead D.A."/>
            <person name="Richardson P."/>
        </authorList>
    </citation>
    <scope>NUCLEOTIDE SEQUENCE [LARGE SCALE GENOMIC DNA]</scope>
    <source>
        <strain>WCH70</strain>
    </source>
</reference>
<gene>
    <name evidence="1" type="primary">tal</name>
    <name type="ordered locus">GWCH70_3332</name>
</gene>
<evidence type="ECO:0000255" key="1">
    <source>
        <dbReference type="HAMAP-Rule" id="MF_00494"/>
    </source>
</evidence>
<proteinExistence type="inferred from homology"/>
<feature type="chain" id="PRO_1000206473" description="Probable transaldolase">
    <location>
        <begin position="1"/>
        <end position="213"/>
    </location>
</feature>
<feature type="active site" description="Schiff-base intermediate with substrate" evidence="1">
    <location>
        <position position="83"/>
    </location>
</feature>
<organism>
    <name type="scientific">Geobacillus sp. (strain WCH70)</name>
    <dbReference type="NCBI Taxonomy" id="471223"/>
    <lineage>
        <taxon>Bacteria</taxon>
        <taxon>Bacillati</taxon>
        <taxon>Bacillota</taxon>
        <taxon>Bacilli</taxon>
        <taxon>Bacillales</taxon>
        <taxon>Anoxybacillaceae</taxon>
        <taxon>Geobacillus</taxon>
    </lineage>
</organism>
<keyword id="KW-0963">Cytoplasm</keyword>
<keyword id="KW-0570">Pentose shunt</keyword>
<keyword id="KW-0704">Schiff base</keyword>
<keyword id="KW-0808">Transferase</keyword>
<protein>
    <recommendedName>
        <fullName evidence="1">Probable transaldolase</fullName>
        <ecNumber evidence="1">2.2.1.2</ecNumber>
    </recommendedName>
</protein>
<dbReference type="EC" id="2.2.1.2" evidence="1"/>
<dbReference type="EMBL" id="CP001638">
    <property type="protein sequence ID" value="ACS25972.1"/>
    <property type="molecule type" value="Genomic_DNA"/>
</dbReference>
<dbReference type="SMR" id="C5D9P4"/>
<dbReference type="STRING" id="471223.GWCH70_3332"/>
<dbReference type="KEGG" id="gwc:GWCH70_3332"/>
<dbReference type="eggNOG" id="COG0176">
    <property type="taxonomic scope" value="Bacteria"/>
</dbReference>
<dbReference type="HOGENOM" id="CLU_079764_0_0_9"/>
<dbReference type="OrthoDB" id="9807051at2"/>
<dbReference type="UniPathway" id="UPA00115">
    <property type="reaction ID" value="UER00414"/>
</dbReference>
<dbReference type="GO" id="GO:0005737">
    <property type="term" value="C:cytoplasm"/>
    <property type="evidence" value="ECO:0007669"/>
    <property type="project" value="UniProtKB-SubCell"/>
</dbReference>
<dbReference type="GO" id="GO:0016832">
    <property type="term" value="F:aldehyde-lyase activity"/>
    <property type="evidence" value="ECO:0007669"/>
    <property type="project" value="InterPro"/>
</dbReference>
<dbReference type="GO" id="GO:0004801">
    <property type="term" value="F:transaldolase activity"/>
    <property type="evidence" value="ECO:0007669"/>
    <property type="project" value="UniProtKB-UniRule"/>
</dbReference>
<dbReference type="GO" id="GO:0005975">
    <property type="term" value="P:carbohydrate metabolic process"/>
    <property type="evidence" value="ECO:0007669"/>
    <property type="project" value="InterPro"/>
</dbReference>
<dbReference type="GO" id="GO:0006098">
    <property type="term" value="P:pentose-phosphate shunt"/>
    <property type="evidence" value="ECO:0007669"/>
    <property type="project" value="UniProtKB-UniRule"/>
</dbReference>
<dbReference type="CDD" id="cd00956">
    <property type="entry name" value="Transaldolase_FSA"/>
    <property type="match status" value="1"/>
</dbReference>
<dbReference type="FunFam" id="3.20.20.70:FF:000018">
    <property type="entry name" value="Probable transaldolase"/>
    <property type="match status" value="1"/>
</dbReference>
<dbReference type="Gene3D" id="3.20.20.70">
    <property type="entry name" value="Aldolase class I"/>
    <property type="match status" value="1"/>
</dbReference>
<dbReference type="HAMAP" id="MF_00494">
    <property type="entry name" value="Transaldolase_3b"/>
    <property type="match status" value="1"/>
</dbReference>
<dbReference type="InterPro" id="IPR013785">
    <property type="entry name" value="Aldolase_TIM"/>
</dbReference>
<dbReference type="InterPro" id="IPR001585">
    <property type="entry name" value="TAL/FSA"/>
</dbReference>
<dbReference type="InterPro" id="IPR022999">
    <property type="entry name" value="Transaldolase_3B"/>
</dbReference>
<dbReference type="InterPro" id="IPR004731">
    <property type="entry name" value="Transaldolase_3B/F6P_aldolase"/>
</dbReference>
<dbReference type="InterPro" id="IPR018225">
    <property type="entry name" value="Transaldolase_AS"/>
</dbReference>
<dbReference type="InterPro" id="IPR033919">
    <property type="entry name" value="TSA/FSA_arc/bac"/>
</dbReference>
<dbReference type="NCBIfam" id="TIGR00875">
    <property type="entry name" value="fsa_talC_mipB"/>
    <property type="match status" value="1"/>
</dbReference>
<dbReference type="PANTHER" id="PTHR10683">
    <property type="entry name" value="TRANSALDOLASE"/>
    <property type="match status" value="1"/>
</dbReference>
<dbReference type="PANTHER" id="PTHR10683:SF36">
    <property type="entry name" value="TRANSALDOLASE"/>
    <property type="match status" value="1"/>
</dbReference>
<dbReference type="Pfam" id="PF00923">
    <property type="entry name" value="TAL_FSA"/>
    <property type="match status" value="1"/>
</dbReference>
<dbReference type="SUPFAM" id="SSF51569">
    <property type="entry name" value="Aldolase"/>
    <property type="match status" value="1"/>
</dbReference>
<dbReference type="PROSITE" id="PS01054">
    <property type="entry name" value="TRANSALDOLASE_1"/>
    <property type="match status" value="1"/>
</dbReference>
<dbReference type="PROSITE" id="PS00958">
    <property type="entry name" value="TRANSALDOLASE_2"/>
    <property type="match status" value="1"/>
</dbReference>
<sequence length="213" mass="23213">MKFFIDTANLEEIKKANELGILAGVTTNPSLVAKENVPFHDRLREITSIVSGSVSAEVISTDAEGMIEEGEELAKIAPNITIKVPMTKEGLKAVKVFSEKGIKTNVTLIFTANQALLAARAGATYVSPFLGRLDDIGHNGFELISTIADIFNIHGIDTEIIAASIRHPLHVTEAALRGAHIATVPYKVLMQLFNHPLTDQGIEKFLADWNRQK</sequence>
<accession>C5D9P4</accession>
<name>TAL_GEOSW</name>